<proteinExistence type="evidence at transcript level"/>
<keyword id="KW-0256">Endoplasmic reticulum</keyword>
<keyword id="KW-0275">Fatty acid biosynthesis</keyword>
<keyword id="KW-0276">Fatty acid metabolism</keyword>
<keyword id="KW-0349">Heme</keyword>
<keyword id="KW-0408">Iron</keyword>
<keyword id="KW-0444">Lipid biosynthesis</keyword>
<keyword id="KW-0443">Lipid metabolism</keyword>
<keyword id="KW-0472">Membrane</keyword>
<keyword id="KW-0479">Metal-binding</keyword>
<keyword id="KW-0492">Microsome</keyword>
<keyword id="KW-0560">Oxidoreductase</keyword>
<keyword id="KW-1185">Reference proteome</keyword>
<keyword id="KW-0746">Sphingolipid metabolism</keyword>
<keyword id="KW-0812">Transmembrane</keyword>
<keyword id="KW-1133">Transmembrane helix</keyword>
<keyword id="KW-0862">Zinc</keyword>
<dbReference type="EC" id="1.14.18.-" evidence="3"/>
<dbReference type="EMBL" id="AB169850">
    <property type="protein sequence ID" value="BAE01931.1"/>
    <property type="molecule type" value="mRNA"/>
</dbReference>
<dbReference type="RefSeq" id="NP_001270612.1">
    <property type="nucleotide sequence ID" value="NM_001283683.1"/>
</dbReference>
<dbReference type="RefSeq" id="XP_045239012.1">
    <property type="nucleotide sequence ID" value="XM_045383077.2"/>
</dbReference>
<dbReference type="SMR" id="Q4R4P4"/>
<dbReference type="STRING" id="9541.ENSMFAP00000012764"/>
<dbReference type="GeneID" id="101865555"/>
<dbReference type="VEuPathDB" id="HostDB:ENSMFAG00000026134"/>
<dbReference type="eggNOG" id="KOG0537">
    <property type="taxonomic scope" value="Eukaryota"/>
</dbReference>
<dbReference type="eggNOG" id="KOG0539">
    <property type="taxonomic scope" value="Eukaryota"/>
</dbReference>
<dbReference type="OMA" id="WTIIEYV"/>
<dbReference type="UniPathway" id="UPA00199"/>
<dbReference type="UniPathway" id="UPA00787"/>
<dbReference type="Proteomes" id="UP000233100">
    <property type="component" value="Chromosome 20"/>
</dbReference>
<dbReference type="GO" id="GO:0005789">
    <property type="term" value="C:endoplasmic reticulum membrane"/>
    <property type="evidence" value="ECO:0007669"/>
    <property type="project" value="UniProtKB-SubCell"/>
</dbReference>
<dbReference type="GO" id="GO:0016020">
    <property type="term" value="C:membrane"/>
    <property type="evidence" value="ECO:0000250"/>
    <property type="project" value="UniProtKB"/>
</dbReference>
<dbReference type="GO" id="GO:0080132">
    <property type="term" value="F:fatty acid 2-hydroxylase activity"/>
    <property type="evidence" value="ECO:0000250"/>
    <property type="project" value="UniProtKB"/>
</dbReference>
<dbReference type="GO" id="GO:0120520">
    <property type="term" value="F:free fatty acid 2-hydroxylase activity"/>
    <property type="evidence" value="ECO:0007669"/>
    <property type="project" value="RHEA"/>
</dbReference>
<dbReference type="GO" id="GO:0020037">
    <property type="term" value="F:heme binding"/>
    <property type="evidence" value="ECO:0007669"/>
    <property type="project" value="InterPro"/>
</dbReference>
<dbReference type="GO" id="GO:0005506">
    <property type="term" value="F:iron ion binding"/>
    <property type="evidence" value="ECO:0007669"/>
    <property type="project" value="InterPro"/>
</dbReference>
<dbReference type="GO" id="GO:0046513">
    <property type="term" value="P:ceramide biosynthetic process"/>
    <property type="evidence" value="ECO:0000250"/>
    <property type="project" value="UniProtKB"/>
</dbReference>
<dbReference type="GO" id="GO:0061436">
    <property type="term" value="P:establishment of skin barrier"/>
    <property type="evidence" value="ECO:0000250"/>
    <property type="project" value="UniProtKB"/>
</dbReference>
<dbReference type="GO" id="GO:0006633">
    <property type="term" value="P:fatty acid biosynthetic process"/>
    <property type="evidence" value="ECO:0007669"/>
    <property type="project" value="UniProtKB-KW"/>
</dbReference>
<dbReference type="GO" id="GO:0006682">
    <property type="term" value="P:galactosylceramide biosynthetic process"/>
    <property type="evidence" value="ECO:0000250"/>
    <property type="project" value="UniProtKB"/>
</dbReference>
<dbReference type="GO" id="GO:0006679">
    <property type="term" value="P:glucosylceramide biosynthetic process"/>
    <property type="evidence" value="ECO:0000250"/>
    <property type="project" value="UniProtKB"/>
</dbReference>
<dbReference type="GO" id="GO:0044857">
    <property type="term" value="P:plasma membrane raft organization"/>
    <property type="evidence" value="ECO:0000250"/>
    <property type="project" value="UniProtKB"/>
</dbReference>
<dbReference type="FunFam" id="3.10.120.10:FF:000011">
    <property type="entry name" value="Fatty acid 2-hydroxylase"/>
    <property type="match status" value="1"/>
</dbReference>
<dbReference type="Gene3D" id="3.10.120.10">
    <property type="entry name" value="Cytochrome b5-like heme/steroid binding domain"/>
    <property type="match status" value="1"/>
</dbReference>
<dbReference type="InterPro" id="IPR001199">
    <property type="entry name" value="Cyt_B5-like_heme/steroid-bd"/>
</dbReference>
<dbReference type="InterPro" id="IPR036400">
    <property type="entry name" value="Cyt_B5-like_heme/steroid_sf"/>
</dbReference>
<dbReference type="InterPro" id="IPR018506">
    <property type="entry name" value="Cyt_B5_heme-BS"/>
</dbReference>
<dbReference type="InterPro" id="IPR006694">
    <property type="entry name" value="Fatty_acid_hydroxylase"/>
</dbReference>
<dbReference type="InterPro" id="IPR014430">
    <property type="entry name" value="Scs7"/>
</dbReference>
<dbReference type="PANTHER" id="PTHR12863:SF1">
    <property type="entry name" value="FATTY ACID 2-HYDROXYLASE"/>
    <property type="match status" value="1"/>
</dbReference>
<dbReference type="PANTHER" id="PTHR12863">
    <property type="entry name" value="FATTY ACID HYDROXYLASE"/>
    <property type="match status" value="1"/>
</dbReference>
<dbReference type="Pfam" id="PF00173">
    <property type="entry name" value="Cyt-b5"/>
    <property type="match status" value="1"/>
</dbReference>
<dbReference type="Pfam" id="PF04116">
    <property type="entry name" value="FA_hydroxylase"/>
    <property type="match status" value="1"/>
</dbReference>
<dbReference type="PIRSF" id="PIRSF005149">
    <property type="entry name" value="IPC-B_HD"/>
    <property type="match status" value="1"/>
</dbReference>
<dbReference type="PRINTS" id="PR00363">
    <property type="entry name" value="CYTOCHROMEB5"/>
</dbReference>
<dbReference type="SMART" id="SM01117">
    <property type="entry name" value="Cyt-b5"/>
    <property type="match status" value="1"/>
</dbReference>
<dbReference type="SUPFAM" id="SSF55856">
    <property type="entry name" value="Cytochrome b5-like heme/steroid binding domain"/>
    <property type="match status" value="1"/>
</dbReference>
<dbReference type="PROSITE" id="PS00191">
    <property type="entry name" value="CYTOCHROME_B5_1"/>
    <property type="match status" value="1"/>
</dbReference>
<dbReference type="PROSITE" id="PS50255">
    <property type="entry name" value="CYTOCHROME_B5_2"/>
    <property type="match status" value="1"/>
</dbReference>
<feature type="chain" id="PRO_0000312350" description="Fatty acid 2-hydroxylase">
    <location>
        <begin position="1"/>
        <end position="372"/>
    </location>
</feature>
<feature type="transmembrane region" description="Helical" evidence="4">
    <location>
        <begin position="168"/>
        <end position="188"/>
    </location>
</feature>
<feature type="transmembrane region" description="Helical" evidence="4">
    <location>
        <begin position="213"/>
        <end position="233"/>
    </location>
</feature>
<feature type="transmembrane region" description="Helical" evidence="4">
    <location>
        <begin position="271"/>
        <end position="291"/>
    </location>
</feature>
<feature type="transmembrane region" description="Helical" evidence="4">
    <location>
        <begin position="292"/>
        <end position="312"/>
    </location>
</feature>
<feature type="domain" description="Cytochrome b5 heme-binding" evidence="5">
    <location>
        <begin position="8"/>
        <end position="86"/>
    </location>
</feature>
<feature type="domain" description="Fatty acid hydroxylase" evidence="4">
    <location>
        <begin position="219"/>
        <end position="361"/>
    </location>
</feature>
<feature type="binding site" description="axial binding residue" evidence="5">
    <location>
        <position position="43"/>
    </location>
    <ligand>
        <name>heme</name>
        <dbReference type="ChEBI" id="CHEBI:30413"/>
    </ligand>
    <ligandPart>
        <name>Fe</name>
        <dbReference type="ChEBI" id="CHEBI:18248"/>
    </ligandPart>
</feature>
<feature type="binding site" description="axial binding residue" evidence="5">
    <location>
        <position position="69"/>
    </location>
    <ligand>
        <name>heme</name>
        <dbReference type="ChEBI" id="CHEBI:30413"/>
    </ligand>
    <ligandPart>
        <name>Fe</name>
        <dbReference type="ChEBI" id="CHEBI:18248"/>
    </ligandPart>
</feature>
<feature type="binding site" evidence="1">
    <location>
        <position position="234"/>
    </location>
    <ligand>
        <name>Zn(2+)</name>
        <dbReference type="ChEBI" id="CHEBI:29105"/>
        <label>1</label>
    </ligand>
</feature>
<feature type="binding site" evidence="1">
    <location>
        <position position="239"/>
    </location>
    <ligand>
        <name>Zn(2+)</name>
        <dbReference type="ChEBI" id="CHEBI:29105"/>
        <label>1</label>
    </ligand>
</feature>
<feature type="binding site" evidence="1">
    <location>
        <position position="257"/>
    </location>
    <ligand>
        <name>Zn(2+)</name>
        <dbReference type="ChEBI" id="CHEBI:29105"/>
        <label>1</label>
    </ligand>
</feature>
<feature type="binding site" evidence="1">
    <location>
        <position position="260"/>
    </location>
    <ligand>
        <name>Zn(2+)</name>
        <dbReference type="ChEBI" id="CHEBI:29105"/>
        <label>2</label>
    </ligand>
</feature>
<feature type="binding site" evidence="1">
    <location>
        <position position="261"/>
    </location>
    <ligand>
        <name>Zn(2+)</name>
        <dbReference type="ChEBI" id="CHEBI:29105"/>
        <label>1</label>
    </ligand>
</feature>
<feature type="binding site" evidence="1">
    <location>
        <position position="315"/>
    </location>
    <ligand>
        <name>Zn(2+)</name>
        <dbReference type="ChEBI" id="CHEBI:29105"/>
        <label>2</label>
    </ligand>
</feature>
<feature type="binding site" evidence="1">
    <location>
        <position position="319"/>
    </location>
    <ligand>
        <name>Zn(2+)</name>
        <dbReference type="ChEBI" id="CHEBI:29105"/>
        <label>2</label>
    </ligand>
</feature>
<feature type="binding site" evidence="1">
    <location>
        <position position="336"/>
    </location>
    <ligand>
        <name>Zn(2+)</name>
        <dbReference type="ChEBI" id="CHEBI:29105"/>
        <label>2</label>
    </ligand>
</feature>
<feature type="binding site" evidence="1">
    <location>
        <position position="339"/>
    </location>
    <ligand>
        <name>Zn(2+)</name>
        <dbReference type="ChEBI" id="CHEBI:29105"/>
        <label>1</label>
    </ligand>
</feature>
<feature type="binding site" evidence="1">
    <location>
        <position position="340"/>
    </location>
    <ligand>
        <name>Zn(2+)</name>
        <dbReference type="ChEBI" id="CHEBI:29105"/>
        <label>2</label>
    </ligand>
</feature>
<accession>Q4R4P4</accession>
<name>FA2H_MACFA</name>
<gene>
    <name type="primary">FA2H</name>
    <name type="synonym">FAAH</name>
    <name type="ORF">QtrA-13193</name>
</gene>
<sequence length="372" mass="42782">MAPAPPPAASFSPSEVQRRLAAGACWVRRGARLYDLSSFVRHHPGGEQLLRARAGQDISADLDGPPHRHSANARRWLEQYYVGELRGEQQGSMENEAVALEETQKTDPAMEPRFKVVDWDKDLVDWQKPLLWQVGHLGEKYDEWVHQPVTRPIRLFHSDLIEGLSKTVWYSVPIIWVPLVLYLSWSYYRTFAQGNVRLFTSFTTEYALAVPKSMFPGLFMLGIFLWSLIEYLIHRFLFHMKPPSDSYYLIMLHFVMHGQHHKAPFDGSRLVFPPVPASLVIGVFYLCLQLILPEAVGGTVFAGGLLGYVLYDMTHYYLHFGSPHRGSYLYNLKAHHVKHHFAHQKSGFGISTKLWDYCFHTLIPEKPHLKTQ</sequence>
<reference key="1">
    <citation type="submission" date="2005-06" db="EMBL/GenBank/DDBJ databases">
        <title>DNA sequences of macaque genes expressed in brain or testis and its evolutionary implications.</title>
        <authorList>
            <consortium name="International consortium for macaque cDNA sequencing and analysis"/>
        </authorList>
    </citation>
    <scope>NUCLEOTIDE SEQUENCE [LARGE SCALE MRNA]</scope>
    <source>
        <tissue>Temporal cortex</tissue>
    </source>
</reference>
<protein>
    <recommendedName>
        <fullName evidence="3">Fatty acid 2-hydroxylase</fullName>
        <ecNumber evidence="3">1.14.18.-</ecNumber>
    </recommendedName>
    <alternativeName>
        <fullName evidence="3">Fatty acid alpha-hydroxylase</fullName>
    </alternativeName>
</protein>
<evidence type="ECO:0000250" key="1">
    <source>
        <dbReference type="UniProtKB" id="Q03529"/>
    </source>
</evidence>
<evidence type="ECO:0000250" key="2">
    <source>
        <dbReference type="UniProtKB" id="Q5MPP0"/>
    </source>
</evidence>
<evidence type="ECO:0000250" key="3">
    <source>
        <dbReference type="UniProtKB" id="Q7L5A8"/>
    </source>
</evidence>
<evidence type="ECO:0000255" key="4"/>
<evidence type="ECO:0000255" key="5">
    <source>
        <dbReference type="PROSITE-ProRule" id="PRU00279"/>
    </source>
</evidence>
<evidence type="ECO:0000305" key="6"/>
<comment type="function">
    <text evidence="2 3">Catalyzes the hydroxylation of free fatty acids at the C-2 position to produce 2-hydroxy fatty acids, which are building blocks of sphingolipids and glycosphingolipids common in neural tissue and epidermis. FA2H is stereospecific for the production of (R)-2-hydroxy fatty acids (By similarity). Plays an essential role in the synthesis of galactosphingolipids of the myelin sheath (By similarity). Responsible for the synthesis of sphingolipids and glycosphingolipids involved in the formation of epidermal lamellar bodies critical for skin permeability barrier (By similarity). Participates in the synthesis of glycosphingolipids and a fraction of type II wax diesters in sebaceous gland, specifically regulating hair follicle homeostasis. Involved in the synthesis of sphingolipids of plasma membrane rafts, controlling lipid raft mobility and trafficking of raft-associated proteins (By similarity).</text>
</comment>
<comment type="catalytic activity">
    <reaction evidence="3">
        <text>a 1,2-saturated fatty acid + 2 Fe(II)-[cytochrome b5] + O2 + 2 H(+) = a (R)-2-hydroxy fatty acid + 2 Fe(III)-[cytochrome b5] + H2O</text>
        <dbReference type="Rhea" id="RHEA:38855"/>
        <dbReference type="Rhea" id="RHEA-COMP:10438"/>
        <dbReference type="Rhea" id="RHEA-COMP:10439"/>
        <dbReference type="ChEBI" id="CHEBI:15377"/>
        <dbReference type="ChEBI" id="CHEBI:15378"/>
        <dbReference type="ChEBI" id="CHEBI:15379"/>
        <dbReference type="ChEBI" id="CHEBI:29033"/>
        <dbReference type="ChEBI" id="CHEBI:29034"/>
        <dbReference type="ChEBI" id="CHEBI:76177"/>
        <dbReference type="ChEBI" id="CHEBI:83955"/>
    </reaction>
    <physiologicalReaction direction="left-to-right" evidence="3">
        <dbReference type="Rhea" id="RHEA:38856"/>
    </physiologicalReaction>
</comment>
<comment type="catalytic activity">
    <reaction evidence="3">
        <text>hexadecanoate + 2 Fe(II)-[cytochrome b5] + O2 + 2 H(+) = (R)-2-hydroxyhexadecanoate + 2 Fe(III)-[cytochrome b5] + H2O</text>
        <dbReference type="Rhea" id="RHEA:38551"/>
        <dbReference type="Rhea" id="RHEA-COMP:10438"/>
        <dbReference type="Rhea" id="RHEA-COMP:10439"/>
        <dbReference type="ChEBI" id="CHEBI:7896"/>
        <dbReference type="ChEBI" id="CHEBI:15377"/>
        <dbReference type="ChEBI" id="CHEBI:15378"/>
        <dbReference type="ChEBI" id="CHEBI:15379"/>
        <dbReference type="ChEBI" id="CHEBI:29033"/>
        <dbReference type="ChEBI" id="CHEBI:29034"/>
        <dbReference type="ChEBI" id="CHEBI:75927"/>
    </reaction>
    <physiologicalReaction direction="left-to-right" evidence="3">
        <dbReference type="Rhea" id="RHEA:38552"/>
    </physiologicalReaction>
</comment>
<comment type="catalytic activity">
    <reaction evidence="3">
        <text>octadecanoate + 2 Fe(II)-[cytochrome b5] + O2 + 2 H(+) = (R)-2-hydroxyoctadecanoate + 2 Fe(III)-[cytochrome b5] + H2O</text>
        <dbReference type="Rhea" id="RHEA:39815"/>
        <dbReference type="Rhea" id="RHEA-COMP:10438"/>
        <dbReference type="Rhea" id="RHEA-COMP:10439"/>
        <dbReference type="ChEBI" id="CHEBI:15377"/>
        <dbReference type="ChEBI" id="CHEBI:15378"/>
        <dbReference type="ChEBI" id="CHEBI:15379"/>
        <dbReference type="ChEBI" id="CHEBI:25629"/>
        <dbReference type="ChEBI" id="CHEBI:29033"/>
        <dbReference type="ChEBI" id="CHEBI:29034"/>
        <dbReference type="ChEBI" id="CHEBI:57562"/>
    </reaction>
    <physiologicalReaction direction="left-to-right" evidence="3">
        <dbReference type="Rhea" id="RHEA:39816"/>
    </physiologicalReaction>
</comment>
<comment type="catalytic activity">
    <reaction evidence="3">
        <text>docosanoate + 2 Fe(II)-[cytochrome b5] + O2 + 2 H(+) = 2-hydroxydocosanoate + 2 Fe(III)-[cytochrome b5] + H2O</text>
        <dbReference type="Rhea" id="RHEA:39819"/>
        <dbReference type="Rhea" id="RHEA-COMP:10438"/>
        <dbReference type="Rhea" id="RHEA-COMP:10439"/>
        <dbReference type="ChEBI" id="CHEBI:15377"/>
        <dbReference type="ChEBI" id="CHEBI:15378"/>
        <dbReference type="ChEBI" id="CHEBI:15379"/>
        <dbReference type="ChEBI" id="CHEBI:23858"/>
        <dbReference type="ChEBI" id="CHEBI:29033"/>
        <dbReference type="ChEBI" id="CHEBI:29034"/>
        <dbReference type="ChEBI" id="CHEBI:76722"/>
    </reaction>
    <physiologicalReaction direction="left-to-right" evidence="3">
        <dbReference type="Rhea" id="RHEA:39820"/>
    </physiologicalReaction>
</comment>
<comment type="catalytic activity">
    <reaction evidence="3">
        <text>tetracosanoate + 2 Fe(II)-[cytochrome b5] + O2 + 2 H(+) = (R)-2-hydroxytetracosanoate + 2 Fe(III)-[cytochrome b5] + H2O</text>
        <dbReference type="Rhea" id="RHEA:38559"/>
        <dbReference type="Rhea" id="RHEA-COMP:10438"/>
        <dbReference type="Rhea" id="RHEA-COMP:10439"/>
        <dbReference type="ChEBI" id="CHEBI:15377"/>
        <dbReference type="ChEBI" id="CHEBI:15378"/>
        <dbReference type="ChEBI" id="CHEBI:15379"/>
        <dbReference type="ChEBI" id="CHEBI:29033"/>
        <dbReference type="ChEBI" id="CHEBI:29034"/>
        <dbReference type="ChEBI" id="CHEBI:31014"/>
        <dbReference type="ChEBI" id="CHEBI:75935"/>
    </reaction>
    <physiologicalReaction direction="left-to-right" evidence="3">
        <dbReference type="Rhea" id="RHEA:38560"/>
    </physiologicalReaction>
</comment>
<comment type="cofactor">
    <cofactor evidence="1">
        <name>Zn(2+)</name>
        <dbReference type="ChEBI" id="CHEBI:29105"/>
    </cofactor>
    <text evidence="1">Binds 2 Zn(2+) ions per subunit that likely form a catalytic dimetal center.</text>
</comment>
<comment type="pathway">
    <text evidence="3">Lipid metabolism; fatty acid metabolism.</text>
</comment>
<comment type="pathway">
    <text evidence="3">Sphingolipid metabolism; galactosylceramide biosynthesis.</text>
</comment>
<comment type="subcellular location">
    <subcellularLocation>
        <location evidence="3">Endoplasmic reticulum membrane</location>
        <topology evidence="3">Multi-pass membrane protein</topology>
    </subcellularLocation>
    <subcellularLocation>
        <location evidence="3">Microsome membrane</location>
        <topology evidence="3">Multi-pass membrane protein</topology>
    </subcellularLocation>
</comment>
<comment type="domain">
    <text>The histidine box domains may contain the active site and/or be involved in metal ion binding.</text>
</comment>
<comment type="domain">
    <text evidence="3">The N-terminal cytochrome b5 heme-binding domain is essential for catalytic activity.</text>
</comment>
<comment type="similarity">
    <text evidence="6">Belongs to the sterol desaturase family. SCS7 subfamily.</text>
</comment>
<organism>
    <name type="scientific">Macaca fascicularis</name>
    <name type="common">Crab-eating macaque</name>
    <name type="synonym">Cynomolgus monkey</name>
    <dbReference type="NCBI Taxonomy" id="9541"/>
    <lineage>
        <taxon>Eukaryota</taxon>
        <taxon>Metazoa</taxon>
        <taxon>Chordata</taxon>
        <taxon>Craniata</taxon>
        <taxon>Vertebrata</taxon>
        <taxon>Euteleostomi</taxon>
        <taxon>Mammalia</taxon>
        <taxon>Eutheria</taxon>
        <taxon>Euarchontoglires</taxon>
        <taxon>Primates</taxon>
        <taxon>Haplorrhini</taxon>
        <taxon>Catarrhini</taxon>
        <taxon>Cercopithecidae</taxon>
        <taxon>Cercopithecinae</taxon>
        <taxon>Macaca</taxon>
    </lineage>
</organism>